<sequence length="642" mass="68918">MMVESKTPLLDTVNTPEDLRKLDPSQLRQFADELRTETINAVSVTGGHLGAGLGVVELTVALHYVFNTPADRLIWDVGHQCYPHKILTGRRDRIRTLRMGGGLSGFTKRAESEYDPFGAGHSSTSISAALGMAVGRDQLGHKNHVICVIGDGSISAGMAYEAMNNAGAMNSRMIVILNDNDMSIAPPVGAMSGYLSRLISSRQYRGLRELGKQVAERLPRPLQEAARRAEEYARGFVTGGTLFEEMGFYYVGPIDGHNLDHLLPVLENIRDDQGTGPVLIHAVTQKGRGYGPAERSADKLHAVSKFDVITGAQAKAKANAPSYTRVFADSLIQEAEADSRVVAITAAMPSGTGLDLFEKRFPDRTYDVGIAEQHAVTFAAGLAAEGLKPFCAIYSTFLQRAYDQVVHDVCIQNLPVRFAIDRAGLVGSDGCTHAGSFDVAYLGCVPNIVIMAAADEAELKHMVATAAAYDHGPIAVRYPRGEGVGLEMPERGQVLEIGKGRIVKEGTKVAILSLGTRLKEALLAAEDLNARGLSTTVADARFAKPIDEALIRRLAQDHEVLITVEEGSIGGFGSYVLHFLAQSGLLDQGLKVRPMVLPDIFQDQDAPAKQYDEAGLNARHIVETALKALGTGLAAETPAARA</sequence>
<proteinExistence type="inferred from homology"/>
<organism>
    <name type="scientific">Rhodospirillum centenum (strain ATCC 51521 / SW)</name>
    <dbReference type="NCBI Taxonomy" id="414684"/>
    <lineage>
        <taxon>Bacteria</taxon>
        <taxon>Pseudomonadati</taxon>
        <taxon>Pseudomonadota</taxon>
        <taxon>Alphaproteobacteria</taxon>
        <taxon>Rhodospirillales</taxon>
        <taxon>Rhodospirillaceae</taxon>
        <taxon>Rhodospirillum</taxon>
    </lineage>
</organism>
<accession>B6IRB5</accession>
<dbReference type="EC" id="2.2.1.7" evidence="1"/>
<dbReference type="EMBL" id="CP000613">
    <property type="protein sequence ID" value="ACI98001.1"/>
    <property type="molecule type" value="Genomic_DNA"/>
</dbReference>
<dbReference type="RefSeq" id="WP_012565793.1">
    <property type="nucleotide sequence ID" value="NC_011420.2"/>
</dbReference>
<dbReference type="SMR" id="B6IRB5"/>
<dbReference type="STRING" id="414684.RC1_0565"/>
<dbReference type="KEGG" id="rce:RC1_0565"/>
<dbReference type="eggNOG" id="COG1154">
    <property type="taxonomic scope" value="Bacteria"/>
</dbReference>
<dbReference type="HOGENOM" id="CLU_009227_1_4_5"/>
<dbReference type="OrthoDB" id="9803371at2"/>
<dbReference type="UniPathway" id="UPA00064">
    <property type="reaction ID" value="UER00091"/>
</dbReference>
<dbReference type="Proteomes" id="UP000001591">
    <property type="component" value="Chromosome"/>
</dbReference>
<dbReference type="GO" id="GO:0008661">
    <property type="term" value="F:1-deoxy-D-xylulose-5-phosphate synthase activity"/>
    <property type="evidence" value="ECO:0007669"/>
    <property type="project" value="UniProtKB-UniRule"/>
</dbReference>
<dbReference type="GO" id="GO:0000287">
    <property type="term" value="F:magnesium ion binding"/>
    <property type="evidence" value="ECO:0007669"/>
    <property type="project" value="UniProtKB-UniRule"/>
</dbReference>
<dbReference type="GO" id="GO:0030976">
    <property type="term" value="F:thiamine pyrophosphate binding"/>
    <property type="evidence" value="ECO:0007669"/>
    <property type="project" value="UniProtKB-UniRule"/>
</dbReference>
<dbReference type="GO" id="GO:0052865">
    <property type="term" value="P:1-deoxy-D-xylulose 5-phosphate biosynthetic process"/>
    <property type="evidence" value="ECO:0007669"/>
    <property type="project" value="UniProtKB-UniPathway"/>
</dbReference>
<dbReference type="GO" id="GO:0019682">
    <property type="term" value="P:glyceraldehyde-3-phosphate metabolic process"/>
    <property type="evidence" value="ECO:0007669"/>
    <property type="project" value="UniProtKB-ARBA"/>
</dbReference>
<dbReference type="GO" id="GO:0016114">
    <property type="term" value="P:terpenoid biosynthetic process"/>
    <property type="evidence" value="ECO:0007669"/>
    <property type="project" value="UniProtKB-UniRule"/>
</dbReference>
<dbReference type="GO" id="GO:0009228">
    <property type="term" value="P:thiamine biosynthetic process"/>
    <property type="evidence" value="ECO:0007669"/>
    <property type="project" value="UniProtKB-UniRule"/>
</dbReference>
<dbReference type="CDD" id="cd02007">
    <property type="entry name" value="TPP_DXS"/>
    <property type="match status" value="1"/>
</dbReference>
<dbReference type="CDD" id="cd07033">
    <property type="entry name" value="TPP_PYR_DXS_TK_like"/>
    <property type="match status" value="1"/>
</dbReference>
<dbReference type="FunFam" id="3.40.50.920:FF:000002">
    <property type="entry name" value="1-deoxy-D-xylulose-5-phosphate synthase"/>
    <property type="match status" value="1"/>
</dbReference>
<dbReference type="FunFam" id="3.40.50.970:FF:000005">
    <property type="entry name" value="1-deoxy-D-xylulose-5-phosphate synthase"/>
    <property type="match status" value="1"/>
</dbReference>
<dbReference type="Gene3D" id="3.40.50.920">
    <property type="match status" value="1"/>
</dbReference>
<dbReference type="Gene3D" id="3.40.50.970">
    <property type="match status" value="2"/>
</dbReference>
<dbReference type="HAMAP" id="MF_00315">
    <property type="entry name" value="DXP_synth"/>
    <property type="match status" value="1"/>
</dbReference>
<dbReference type="InterPro" id="IPR005477">
    <property type="entry name" value="Dxylulose-5-P_synthase"/>
</dbReference>
<dbReference type="InterPro" id="IPR029061">
    <property type="entry name" value="THDP-binding"/>
</dbReference>
<dbReference type="InterPro" id="IPR009014">
    <property type="entry name" value="Transketo_C/PFOR_II"/>
</dbReference>
<dbReference type="InterPro" id="IPR005475">
    <property type="entry name" value="Transketolase-like_Pyr-bd"/>
</dbReference>
<dbReference type="InterPro" id="IPR033248">
    <property type="entry name" value="Transketolase_C"/>
</dbReference>
<dbReference type="InterPro" id="IPR049557">
    <property type="entry name" value="Transketolase_CS"/>
</dbReference>
<dbReference type="NCBIfam" id="TIGR00204">
    <property type="entry name" value="dxs"/>
    <property type="match status" value="1"/>
</dbReference>
<dbReference type="NCBIfam" id="NF003933">
    <property type="entry name" value="PRK05444.2-2"/>
    <property type="match status" value="1"/>
</dbReference>
<dbReference type="PANTHER" id="PTHR43322">
    <property type="entry name" value="1-D-DEOXYXYLULOSE 5-PHOSPHATE SYNTHASE-RELATED"/>
    <property type="match status" value="1"/>
</dbReference>
<dbReference type="PANTHER" id="PTHR43322:SF5">
    <property type="entry name" value="1-DEOXY-D-XYLULOSE-5-PHOSPHATE SYNTHASE, CHLOROPLASTIC"/>
    <property type="match status" value="1"/>
</dbReference>
<dbReference type="Pfam" id="PF13292">
    <property type="entry name" value="DXP_synthase_N"/>
    <property type="match status" value="1"/>
</dbReference>
<dbReference type="Pfam" id="PF02779">
    <property type="entry name" value="Transket_pyr"/>
    <property type="match status" value="1"/>
</dbReference>
<dbReference type="Pfam" id="PF02780">
    <property type="entry name" value="Transketolase_C"/>
    <property type="match status" value="1"/>
</dbReference>
<dbReference type="SMART" id="SM00861">
    <property type="entry name" value="Transket_pyr"/>
    <property type="match status" value="1"/>
</dbReference>
<dbReference type="SUPFAM" id="SSF52518">
    <property type="entry name" value="Thiamin diphosphate-binding fold (THDP-binding)"/>
    <property type="match status" value="2"/>
</dbReference>
<dbReference type="SUPFAM" id="SSF52922">
    <property type="entry name" value="TK C-terminal domain-like"/>
    <property type="match status" value="1"/>
</dbReference>
<dbReference type="PROSITE" id="PS00801">
    <property type="entry name" value="TRANSKETOLASE_1"/>
    <property type="match status" value="1"/>
</dbReference>
<gene>
    <name evidence="1" type="primary">dxs</name>
    <name type="ordered locus">RC1_0565</name>
</gene>
<comment type="function">
    <text evidence="1">Catalyzes the acyloin condensation reaction between C atoms 2 and 3 of pyruvate and glyceraldehyde 3-phosphate to yield 1-deoxy-D-xylulose-5-phosphate (DXP).</text>
</comment>
<comment type="catalytic activity">
    <reaction evidence="1">
        <text>D-glyceraldehyde 3-phosphate + pyruvate + H(+) = 1-deoxy-D-xylulose 5-phosphate + CO2</text>
        <dbReference type="Rhea" id="RHEA:12605"/>
        <dbReference type="ChEBI" id="CHEBI:15361"/>
        <dbReference type="ChEBI" id="CHEBI:15378"/>
        <dbReference type="ChEBI" id="CHEBI:16526"/>
        <dbReference type="ChEBI" id="CHEBI:57792"/>
        <dbReference type="ChEBI" id="CHEBI:59776"/>
        <dbReference type="EC" id="2.2.1.7"/>
    </reaction>
</comment>
<comment type="cofactor">
    <cofactor evidence="1">
        <name>Mg(2+)</name>
        <dbReference type="ChEBI" id="CHEBI:18420"/>
    </cofactor>
    <text evidence="1">Binds 1 Mg(2+) ion per subunit.</text>
</comment>
<comment type="cofactor">
    <cofactor evidence="1">
        <name>thiamine diphosphate</name>
        <dbReference type="ChEBI" id="CHEBI:58937"/>
    </cofactor>
    <text evidence="1">Binds 1 thiamine pyrophosphate per subunit.</text>
</comment>
<comment type="pathway">
    <text evidence="1">Metabolic intermediate biosynthesis; 1-deoxy-D-xylulose 5-phosphate biosynthesis; 1-deoxy-D-xylulose 5-phosphate from D-glyceraldehyde 3-phosphate and pyruvate: step 1/1.</text>
</comment>
<comment type="subunit">
    <text evidence="1">Homodimer.</text>
</comment>
<comment type="similarity">
    <text evidence="1">Belongs to the transketolase family. DXPS subfamily.</text>
</comment>
<evidence type="ECO:0000255" key="1">
    <source>
        <dbReference type="HAMAP-Rule" id="MF_00315"/>
    </source>
</evidence>
<keyword id="KW-0414">Isoprene biosynthesis</keyword>
<keyword id="KW-0460">Magnesium</keyword>
<keyword id="KW-0479">Metal-binding</keyword>
<keyword id="KW-1185">Reference proteome</keyword>
<keyword id="KW-0784">Thiamine biosynthesis</keyword>
<keyword id="KW-0786">Thiamine pyrophosphate</keyword>
<keyword id="KW-0808">Transferase</keyword>
<name>DXS_RHOCS</name>
<protein>
    <recommendedName>
        <fullName evidence="1">1-deoxy-D-xylulose-5-phosphate synthase</fullName>
        <ecNumber evidence="1">2.2.1.7</ecNumber>
    </recommendedName>
    <alternativeName>
        <fullName evidence="1">1-deoxyxylulose-5-phosphate synthase</fullName>
        <shortName evidence="1">DXP synthase</shortName>
        <shortName evidence="1">DXPS</shortName>
    </alternativeName>
</protein>
<reference key="1">
    <citation type="submission" date="2007-03" db="EMBL/GenBank/DDBJ databases">
        <title>Genome sequence of Rhodospirillum centenum.</title>
        <authorList>
            <person name="Touchman J.W."/>
            <person name="Bauer C."/>
            <person name="Blankenship R.E."/>
        </authorList>
    </citation>
    <scope>NUCLEOTIDE SEQUENCE [LARGE SCALE GENOMIC DNA]</scope>
    <source>
        <strain>ATCC 51521 / SW</strain>
    </source>
</reference>
<feature type="chain" id="PRO_1000115762" description="1-deoxy-D-xylulose-5-phosphate synthase">
    <location>
        <begin position="1"/>
        <end position="642"/>
    </location>
</feature>
<feature type="binding site" evidence="1">
    <location>
        <position position="79"/>
    </location>
    <ligand>
        <name>thiamine diphosphate</name>
        <dbReference type="ChEBI" id="CHEBI:58937"/>
    </ligand>
</feature>
<feature type="binding site" evidence="1">
    <location>
        <begin position="120"/>
        <end position="122"/>
    </location>
    <ligand>
        <name>thiamine diphosphate</name>
        <dbReference type="ChEBI" id="CHEBI:58937"/>
    </ligand>
</feature>
<feature type="binding site" evidence="1">
    <location>
        <position position="151"/>
    </location>
    <ligand>
        <name>Mg(2+)</name>
        <dbReference type="ChEBI" id="CHEBI:18420"/>
    </ligand>
</feature>
<feature type="binding site" evidence="1">
    <location>
        <begin position="152"/>
        <end position="153"/>
    </location>
    <ligand>
        <name>thiamine diphosphate</name>
        <dbReference type="ChEBI" id="CHEBI:58937"/>
    </ligand>
</feature>
<feature type="binding site" evidence="1">
    <location>
        <position position="180"/>
    </location>
    <ligand>
        <name>Mg(2+)</name>
        <dbReference type="ChEBI" id="CHEBI:18420"/>
    </ligand>
</feature>
<feature type="binding site" evidence="1">
    <location>
        <position position="180"/>
    </location>
    <ligand>
        <name>thiamine diphosphate</name>
        <dbReference type="ChEBI" id="CHEBI:58937"/>
    </ligand>
</feature>
<feature type="binding site" evidence="1">
    <location>
        <position position="290"/>
    </location>
    <ligand>
        <name>thiamine diphosphate</name>
        <dbReference type="ChEBI" id="CHEBI:58937"/>
    </ligand>
</feature>
<feature type="binding site" evidence="1">
    <location>
        <position position="372"/>
    </location>
    <ligand>
        <name>thiamine diphosphate</name>
        <dbReference type="ChEBI" id="CHEBI:58937"/>
    </ligand>
</feature>